<name>GPMA_SALPC</name>
<evidence type="ECO:0000255" key="1">
    <source>
        <dbReference type="HAMAP-Rule" id="MF_01039"/>
    </source>
</evidence>
<dbReference type="EC" id="5.4.2.11" evidence="1"/>
<dbReference type="EMBL" id="CP000857">
    <property type="protein sequence ID" value="ACN44942.1"/>
    <property type="molecule type" value="Genomic_DNA"/>
</dbReference>
<dbReference type="RefSeq" id="WP_000301554.1">
    <property type="nucleotide sequence ID" value="NC_012125.1"/>
</dbReference>
<dbReference type="SMR" id="C0PWW0"/>
<dbReference type="KEGG" id="sei:SPC_0768"/>
<dbReference type="HOGENOM" id="CLU_033323_1_1_6"/>
<dbReference type="UniPathway" id="UPA00109">
    <property type="reaction ID" value="UER00186"/>
</dbReference>
<dbReference type="Proteomes" id="UP000001599">
    <property type="component" value="Chromosome"/>
</dbReference>
<dbReference type="GO" id="GO:0004619">
    <property type="term" value="F:phosphoglycerate mutase activity"/>
    <property type="evidence" value="ECO:0007669"/>
    <property type="project" value="UniProtKB-EC"/>
</dbReference>
<dbReference type="GO" id="GO:0006094">
    <property type="term" value="P:gluconeogenesis"/>
    <property type="evidence" value="ECO:0007669"/>
    <property type="project" value="UniProtKB-UniRule"/>
</dbReference>
<dbReference type="GO" id="GO:0006096">
    <property type="term" value="P:glycolytic process"/>
    <property type="evidence" value="ECO:0007669"/>
    <property type="project" value="UniProtKB-UniRule"/>
</dbReference>
<dbReference type="CDD" id="cd07067">
    <property type="entry name" value="HP_PGM_like"/>
    <property type="match status" value="1"/>
</dbReference>
<dbReference type="FunFam" id="3.40.50.1240:FF:000003">
    <property type="entry name" value="2,3-bisphosphoglycerate-dependent phosphoglycerate mutase"/>
    <property type="match status" value="1"/>
</dbReference>
<dbReference type="Gene3D" id="3.40.50.1240">
    <property type="entry name" value="Phosphoglycerate mutase-like"/>
    <property type="match status" value="1"/>
</dbReference>
<dbReference type="HAMAP" id="MF_01039">
    <property type="entry name" value="PGAM_GpmA"/>
    <property type="match status" value="1"/>
</dbReference>
<dbReference type="InterPro" id="IPR013078">
    <property type="entry name" value="His_Pase_superF_clade-1"/>
</dbReference>
<dbReference type="InterPro" id="IPR029033">
    <property type="entry name" value="His_PPase_superfam"/>
</dbReference>
<dbReference type="InterPro" id="IPR001345">
    <property type="entry name" value="PG/BPGM_mutase_AS"/>
</dbReference>
<dbReference type="InterPro" id="IPR005952">
    <property type="entry name" value="Phosphogly_mut1"/>
</dbReference>
<dbReference type="NCBIfam" id="TIGR01258">
    <property type="entry name" value="pgm_1"/>
    <property type="match status" value="1"/>
</dbReference>
<dbReference type="NCBIfam" id="NF010713">
    <property type="entry name" value="PRK14115.1"/>
    <property type="match status" value="1"/>
</dbReference>
<dbReference type="PANTHER" id="PTHR11931">
    <property type="entry name" value="PHOSPHOGLYCERATE MUTASE"/>
    <property type="match status" value="1"/>
</dbReference>
<dbReference type="Pfam" id="PF00300">
    <property type="entry name" value="His_Phos_1"/>
    <property type="match status" value="1"/>
</dbReference>
<dbReference type="PIRSF" id="PIRSF000709">
    <property type="entry name" value="6PFK_2-Ptase"/>
    <property type="match status" value="1"/>
</dbReference>
<dbReference type="SMART" id="SM00855">
    <property type="entry name" value="PGAM"/>
    <property type="match status" value="1"/>
</dbReference>
<dbReference type="SUPFAM" id="SSF53254">
    <property type="entry name" value="Phosphoglycerate mutase-like"/>
    <property type="match status" value="1"/>
</dbReference>
<dbReference type="PROSITE" id="PS00175">
    <property type="entry name" value="PG_MUTASE"/>
    <property type="match status" value="1"/>
</dbReference>
<reference key="1">
    <citation type="journal article" date="2009" name="PLoS ONE">
        <title>Salmonella paratyphi C: genetic divergence from Salmonella choleraesuis and pathogenic convergence with Salmonella typhi.</title>
        <authorList>
            <person name="Liu W.-Q."/>
            <person name="Feng Y."/>
            <person name="Wang Y."/>
            <person name="Zou Q.-H."/>
            <person name="Chen F."/>
            <person name="Guo J.-T."/>
            <person name="Peng Y.-H."/>
            <person name="Jin Y."/>
            <person name="Li Y.-G."/>
            <person name="Hu S.-N."/>
            <person name="Johnston R.N."/>
            <person name="Liu G.-R."/>
            <person name="Liu S.-L."/>
        </authorList>
    </citation>
    <scope>NUCLEOTIDE SEQUENCE [LARGE SCALE GENOMIC DNA]</scope>
    <source>
        <strain>RKS4594</strain>
    </source>
</reference>
<comment type="function">
    <text evidence="1">Catalyzes the interconversion of 2-phosphoglycerate and 3-phosphoglycerate.</text>
</comment>
<comment type="catalytic activity">
    <reaction evidence="1">
        <text>(2R)-2-phosphoglycerate = (2R)-3-phosphoglycerate</text>
        <dbReference type="Rhea" id="RHEA:15901"/>
        <dbReference type="ChEBI" id="CHEBI:58272"/>
        <dbReference type="ChEBI" id="CHEBI:58289"/>
        <dbReference type="EC" id="5.4.2.11"/>
    </reaction>
</comment>
<comment type="pathway">
    <text evidence="1">Carbohydrate degradation; glycolysis; pyruvate from D-glyceraldehyde 3-phosphate: step 3/5.</text>
</comment>
<comment type="subunit">
    <text evidence="1">Homodimer.</text>
</comment>
<comment type="similarity">
    <text evidence="1">Belongs to the phosphoglycerate mutase family. BPG-dependent PGAM subfamily.</text>
</comment>
<keyword id="KW-0312">Gluconeogenesis</keyword>
<keyword id="KW-0324">Glycolysis</keyword>
<keyword id="KW-0413">Isomerase</keyword>
<feature type="chain" id="PRO_1000149529" description="2,3-bisphosphoglycerate-dependent phosphoglycerate mutase">
    <location>
        <begin position="1"/>
        <end position="250"/>
    </location>
</feature>
<feature type="active site" description="Tele-phosphohistidine intermediate" evidence="1">
    <location>
        <position position="11"/>
    </location>
</feature>
<feature type="active site" description="Proton donor/acceptor" evidence="1">
    <location>
        <position position="89"/>
    </location>
</feature>
<feature type="binding site" evidence="1">
    <location>
        <begin position="10"/>
        <end position="17"/>
    </location>
    <ligand>
        <name>substrate</name>
    </ligand>
</feature>
<feature type="binding site" evidence="1">
    <location>
        <begin position="23"/>
        <end position="24"/>
    </location>
    <ligand>
        <name>substrate</name>
    </ligand>
</feature>
<feature type="binding site" evidence="1">
    <location>
        <position position="62"/>
    </location>
    <ligand>
        <name>substrate</name>
    </ligand>
</feature>
<feature type="binding site" evidence="1">
    <location>
        <begin position="89"/>
        <end position="92"/>
    </location>
    <ligand>
        <name>substrate</name>
    </ligand>
</feature>
<feature type="binding site" evidence="1">
    <location>
        <position position="100"/>
    </location>
    <ligand>
        <name>substrate</name>
    </ligand>
</feature>
<feature type="binding site" evidence="1">
    <location>
        <begin position="116"/>
        <end position="117"/>
    </location>
    <ligand>
        <name>substrate</name>
    </ligand>
</feature>
<feature type="binding site" evidence="1">
    <location>
        <begin position="185"/>
        <end position="186"/>
    </location>
    <ligand>
        <name>substrate</name>
    </ligand>
</feature>
<feature type="site" description="Transition state stabilizer" evidence="1">
    <location>
        <position position="184"/>
    </location>
</feature>
<sequence length="250" mass="28493">MAVTKLVLVRHGESQWNKENRFTGWYDVDLSEKGVSEAKAAGKLLKEEGFSFDFAYTSVLKRAIHTLWNVLDELDQAWLPVEKSWKLNERHYGALQGLNKAETAEKYGDEQVKQWRRGFAVTPPELTKDDERYPGHDPRYAKLSEKELPLTESLALTIDRVIPYWNDTILPRMKSGERVIIAAHGNSLRALVKYLDNMSEDEILELNIPTGVPLVYEFDENFKPIKHYYLGNADEIAAKAAAVANQGKAK</sequence>
<gene>
    <name evidence="1" type="primary">gpmA</name>
    <name type="ordered locus">SPC_0768</name>
</gene>
<protein>
    <recommendedName>
        <fullName evidence="1">2,3-bisphosphoglycerate-dependent phosphoglycerate mutase</fullName>
        <shortName evidence="1">BPG-dependent PGAM</shortName>
        <shortName evidence="1">PGAM</shortName>
        <shortName evidence="1">Phosphoglyceromutase</shortName>
        <shortName evidence="1">dPGM</shortName>
        <ecNumber evidence="1">5.4.2.11</ecNumber>
    </recommendedName>
</protein>
<organism>
    <name type="scientific">Salmonella paratyphi C (strain RKS4594)</name>
    <dbReference type="NCBI Taxonomy" id="476213"/>
    <lineage>
        <taxon>Bacteria</taxon>
        <taxon>Pseudomonadati</taxon>
        <taxon>Pseudomonadota</taxon>
        <taxon>Gammaproteobacteria</taxon>
        <taxon>Enterobacterales</taxon>
        <taxon>Enterobacteriaceae</taxon>
        <taxon>Salmonella</taxon>
    </lineage>
</organism>
<proteinExistence type="inferred from homology"/>
<accession>C0PWW0</accession>